<accession>Q5FFQ2</accession>
<name>YQGF_EHRRG</name>
<reference key="1">
    <citation type="journal article" date="2006" name="J. Bacteriol.">
        <title>Comparative genomic analysis of three strains of Ehrlichia ruminantium reveals an active process of genome size plasticity.</title>
        <authorList>
            <person name="Frutos R."/>
            <person name="Viari A."/>
            <person name="Ferraz C."/>
            <person name="Morgat A."/>
            <person name="Eychenie S."/>
            <person name="Kandassamy Y."/>
            <person name="Chantal I."/>
            <person name="Bensaid A."/>
            <person name="Coissac E."/>
            <person name="Vachiery N."/>
            <person name="Demaille J."/>
            <person name="Martinez D."/>
        </authorList>
    </citation>
    <scope>NUCLEOTIDE SEQUENCE [LARGE SCALE GENOMIC DNA]</scope>
    <source>
        <strain>Gardel</strain>
    </source>
</reference>
<protein>
    <recommendedName>
        <fullName evidence="1">Putative pre-16S rRNA nuclease</fullName>
        <ecNumber evidence="1">3.1.-.-</ecNumber>
    </recommendedName>
</protein>
<keyword id="KW-0963">Cytoplasm</keyword>
<keyword id="KW-0378">Hydrolase</keyword>
<keyword id="KW-0540">Nuclease</keyword>
<keyword id="KW-0690">Ribosome biogenesis</keyword>
<comment type="function">
    <text evidence="1">Could be a nuclease involved in processing of the 5'-end of pre-16S rRNA.</text>
</comment>
<comment type="subcellular location">
    <subcellularLocation>
        <location evidence="1">Cytoplasm</location>
    </subcellularLocation>
</comment>
<comment type="similarity">
    <text evidence="1">Belongs to the YqgF nuclease family.</text>
</comment>
<dbReference type="EC" id="3.1.-.-" evidence="1"/>
<dbReference type="EMBL" id="CR925677">
    <property type="protein sequence ID" value="CAI28034.1"/>
    <property type="molecule type" value="Genomic_DNA"/>
</dbReference>
<dbReference type="RefSeq" id="WP_011255694.1">
    <property type="nucleotide sequence ID" value="NC_006831.1"/>
</dbReference>
<dbReference type="SMR" id="Q5FFQ2"/>
<dbReference type="KEGG" id="erg:ERGA_CDS_05820"/>
<dbReference type="HOGENOM" id="CLU_098240_2_2_5"/>
<dbReference type="OrthoDB" id="9796140at2"/>
<dbReference type="Proteomes" id="UP000000533">
    <property type="component" value="Chromosome"/>
</dbReference>
<dbReference type="GO" id="GO:0005829">
    <property type="term" value="C:cytosol"/>
    <property type="evidence" value="ECO:0007669"/>
    <property type="project" value="TreeGrafter"/>
</dbReference>
<dbReference type="GO" id="GO:0004518">
    <property type="term" value="F:nuclease activity"/>
    <property type="evidence" value="ECO:0007669"/>
    <property type="project" value="UniProtKB-KW"/>
</dbReference>
<dbReference type="GO" id="GO:0000967">
    <property type="term" value="P:rRNA 5'-end processing"/>
    <property type="evidence" value="ECO:0007669"/>
    <property type="project" value="UniProtKB-UniRule"/>
</dbReference>
<dbReference type="CDD" id="cd16964">
    <property type="entry name" value="YqgF"/>
    <property type="match status" value="1"/>
</dbReference>
<dbReference type="Gene3D" id="3.30.420.140">
    <property type="entry name" value="YqgF/RNase H-like domain"/>
    <property type="match status" value="1"/>
</dbReference>
<dbReference type="HAMAP" id="MF_00651">
    <property type="entry name" value="Nuclease_YqgF"/>
    <property type="match status" value="1"/>
</dbReference>
<dbReference type="InterPro" id="IPR012337">
    <property type="entry name" value="RNaseH-like_sf"/>
</dbReference>
<dbReference type="InterPro" id="IPR005227">
    <property type="entry name" value="YqgF"/>
</dbReference>
<dbReference type="InterPro" id="IPR006641">
    <property type="entry name" value="YqgF/RNaseH-like_dom"/>
</dbReference>
<dbReference type="InterPro" id="IPR037027">
    <property type="entry name" value="YqgF/RNaseH-like_dom_sf"/>
</dbReference>
<dbReference type="NCBIfam" id="TIGR00250">
    <property type="entry name" value="RNAse_H_YqgF"/>
    <property type="match status" value="1"/>
</dbReference>
<dbReference type="PANTHER" id="PTHR33317">
    <property type="entry name" value="POLYNUCLEOTIDYL TRANSFERASE, RIBONUCLEASE H-LIKE SUPERFAMILY PROTEIN"/>
    <property type="match status" value="1"/>
</dbReference>
<dbReference type="PANTHER" id="PTHR33317:SF4">
    <property type="entry name" value="POLYNUCLEOTIDYL TRANSFERASE, RIBONUCLEASE H-LIKE SUPERFAMILY PROTEIN"/>
    <property type="match status" value="1"/>
</dbReference>
<dbReference type="Pfam" id="PF03652">
    <property type="entry name" value="RuvX"/>
    <property type="match status" value="1"/>
</dbReference>
<dbReference type="SMART" id="SM00732">
    <property type="entry name" value="YqgFc"/>
    <property type="match status" value="1"/>
</dbReference>
<dbReference type="SUPFAM" id="SSF53098">
    <property type="entry name" value="Ribonuclease H-like"/>
    <property type="match status" value="1"/>
</dbReference>
<proteinExistence type="inferred from homology"/>
<evidence type="ECO:0000255" key="1">
    <source>
        <dbReference type="HAMAP-Rule" id="MF_00651"/>
    </source>
</evidence>
<sequence>MLYKNINEFEQVIDKTKRIMCLDFGEKKIGVALSDKTNLIAIPHSVYVRKNTRKDLGGLYGILIENDAGSMVIGLPLDLFGMGNELCDKVMLFANRMIKKYAINIYLHDERYSTAMATRVAKLANIKRKESQKIDDKIAAVLILQQVLDMVKIYQM</sequence>
<organism>
    <name type="scientific">Ehrlichia ruminantium (strain Gardel)</name>
    <dbReference type="NCBI Taxonomy" id="302409"/>
    <lineage>
        <taxon>Bacteria</taxon>
        <taxon>Pseudomonadati</taxon>
        <taxon>Pseudomonadota</taxon>
        <taxon>Alphaproteobacteria</taxon>
        <taxon>Rickettsiales</taxon>
        <taxon>Anaplasmataceae</taxon>
        <taxon>Ehrlichia</taxon>
    </lineage>
</organism>
<gene>
    <name type="ordered locus">ERGA_CDS_05820</name>
</gene>
<feature type="chain" id="PRO_0000172061" description="Putative pre-16S rRNA nuclease">
    <location>
        <begin position="1"/>
        <end position="156"/>
    </location>
</feature>